<reference key="1">
    <citation type="journal article" date="2005" name="Proc. Natl. Acad. Sci. U.S.A.">
        <title>Genome analysis of multiple pathogenic isolates of Streptococcus agalactiae: implications for the microbial 'pan-genome'.</title>
        <authorList>
            <person name="Tettelin H."/>
            <person name="Masignani V."/>
            <person name="Cieslewicz M.J."/>
            <person name="Donati C."/>
            <person name="Medini D."/>
            <person name="Ward N.L."/>
            <person name="Angiuoli S.V."/>
            <person name="Crabtree J."/>
            <person name="Jones A.L."/>
            <person name="Durkin A.S."/>
            <person name="DeBoy R.T."/>
            <person name="Davidsen T.M."/>
            <person name="Mora M."/>
            <person name="Scarselli M."/>
            <person name="Margarit y Ros I."/>
            <person name="Peterson J.D."/>
            <person name="Hauser C.R."/>
            <person name="Sundaram J.P."/>
            <person name="Nelson W.C."/>
            <person name="Madupu R."/>
            <person name="Brinkac L.M."/>
            <person name="Dodson R.J."/>
            <person name="Rosovitz M.J."/>
            <person name="Sullivan S.A."/>
            <person name="Daugherty S.C."/>
            <person name="Haft D.H."/>
            <person name="Selengut J."/>
            <person name="Gwinn M.L."/>
            <person name="Zhou L."/>
            <person name="Zafar N."/>
            <person name="Khouri H."/>
            <person name="Radune D."/>
            <person name="Dimitrov G."/>
            <person name="Watkins K."/>
            <person name="O'Connor K.J."/>
            <person name="Smith S."/>
            <person name="Utterback T.R."/>
            <person name="White O."/>
            <person name="Rubens C.E."/>
            <person name="Grandi G."/>
            <person name="Madoff L.C."/>
            <person name="Kasper D.L."/>
            <person name="Telford J.L."/>
            <person name="Wessels M.R."/>
            <person name="Rappuoli R."/>
            <person name="Fraser C.M."/>
        </authorList>
    </citation>
    <scope>NUCLEOTIDE SEQUENCE [LARGE SCALE GENOMIC DNA]</scope>
    <source>
        <strain>ATCC 27591 / A909 / CDC SS700</strain>
    </source>
</reference>
<dbReference type="EC" id="2.7.4.3" evidence="1"/>
<dbReference type="EMBL" id="CP000114">
    <property type="protein sequence ID" value="ABA45138.1"/>
    <property type="molecule type" value="Genomic_DNA"/>
</dbReference>
<dbReference type="RefSeq" id="WP_001050421.1">
    <property type="nucleotide sequence ID" value="NC_007432.1"/>
</dbReference>
<dbReference type="SMR" id="Q3K3U8"/>
<dbReference type="KEGG" id="sak:SAK_0112"/>
<dbReference type="HOGENOM" id="CLU_032354_1_2_9"/>
<dbReference type="UniPathway" id="UPA00588">
    <property type="reaction ID" value="UER00649"/>
</dbReference>
<dbReference type="GO" id="GO:0005737">
    <property type="term" value="C:cytoplasm"/>
    <property type="evidence" value="ECO:0007669"/>
    <property type="project" value="UniProtKB-SubCell"/>
</dbReference>
<dbReference type="GO" id="GO:0004017">
    <property type="term" value="F:adenylate kinase activity"/>
    <property type="evidence" value="ECO:0007669"/>
    <property type="project" value="UniProtKB-UniRule"/>
</dbReference>
<dbReference type="GO" id="GO:0005524">
    <property type="term" value="F:ATP binding"/>
    <property type="evidence" value="ECO:0007669"/>
    <property type="project" value="UniProtKB-UniRule"/>
</dbReference>
<dbReference type="GO" id="GO:0044209">
    <property type="term" value="P:AMP salvage"/>
    <property type="evidence" value="ECO:0007669"/>
    <property type="project" value="UniProtKB-UniRule"/>
</dbReference>
<dbReference type="CDD" id="cd01428">
    <property type="entry name" value="ADK"/>
    <property type="match status" value="1"/>
</dbReference>
<dbReference type="FunFam" id="3.40.50.300:FF:000106">
    <property type="entry name" value="Adenylate kinase mitochondrial"/>
    <property type="match status" value="1"/>
</dbReference>
<dbReference type="Gene3D" id="3.40.50.300">
    <property type="entry name" value="P-loop containing nucleotide triphosphate hydrolases"/>
    <property type="match status" value="1"/>
</dbReference>
<dbReference type="HAMAP" id="MF_00235">
    <property type="entry name" value="Adenylate_kinase_Adk"/>
    <property type="match status" value="1"/>
</dbReference>
<dbReference type="InterPro" id="IPR006259">
    <property type="entry name" value="Adenyl_kin_sub"/>
</dbReference>
<dbReference type="InterPro" id="IPR000850">
    <property type="entry name" value="Adenylat/UMP-CMP_kin"/>
</dbReference>
<dbReference type="InterPro" id="IPR033690">
    <property type="entry name" value="Adenylat_kinase_CS"/>
</dbReference>
<dbReference type="InterPro" id="IPR027417">
    <property type="entry name" value="P-loop_NTPase"/>
</dbReference>
<dbReference type="NCBIfam" id="TIGR01351">
    <property type="entry name" value="adk"/>
    <property type="match status" value="1"/>
</dbReference>
<dbReference type="NCBIfam" id="NF001380">
    <property type="entry name" value="PRK00279.1-2"/>
    <property type="match status" value="1"/>
</dbReference>
<dbReference type="NCBIfam" id="NF001381">
    <property type="entry name" value="PRK00279.1-3"/>
    <property type="match status" value="1"/>
</dbReference>
<dbReference type="NCBIfam" id="NF001382">
    <property type="entry name" value="PRK00279.1-4"/>
    <property type="match status" value="1"/>
</dbReference>
<dbReference type="PANTHER" id="PTHR23359">
    <property type="entry name" value="NUCLEOTIDE KINASE"/>
    <property type="match status" value="1"/>
</dbReference>
<dbReference type="Pfam" id="PF00406">
    <property type="entry name" value="ADK"/>
    <property type="match status" value="1"/>
</dbReference>
<dbReference type="PRINTS" id="PR00094">
    <property type="entry name" value="ADENYLTKNASE"/>
</dbReference>
<dbReference type="SUPFAM" id="SSF52540">
    <property type="entry name" value="P-loop containing nucleoside triphosphate hydrolases"/>
    <property type="match status" value="1"/>
</dbReference>
<dbReference type="PROSITE" id="PS00113">
    <property type="entry name" value="ADENYLATE_KINASE"/>
    <property type="match status" value="1"/>
</dbReference>
<evidence type="ECO:0000255" key="1">
    <source>
        <dbReference type="HAMAP-Rule" id="MF_00235"/>
    </source>
</evidence>
<proteinExistence type="inferred from homology"/>
<sequence>MNLLIMGLPGAGKGTQAAKIVEEFGVAHISTGDMFRAAMANQTEMGRLAKSYIDKGELVPDEVTNGIVKERLAEDDIAEKGFLLDGYPRTIEQAHALDATLEELGLRLDGVINIKVDPSCLIERLSGRIINRKTGETFHKVFNPPVDYKEEDYYQREDDKPETVKRRLDVNIAQGESILEHYRKLGLVTDIEGNQEITEVFADVEKALLELK</sequence>
<keyword id="KW-0067">ATP-binding</keyword>
<keyword id="KW-0963">Cytoplasm</keyword>
<keyword id="KW-0418">Kinase</keyword>
<keyword id="KW-0545">Nucleotide biosynthesis</keyword>
<keyword id="KW-0547">Nucleotide-binding</keyword>
<keyword id="KW-0808">Transferase</keyword>
<name>KAD_STRA1</name>
<protein>
    <recommendedName>
        <fullName evidence="1">Adenylate kinase</fullName>
        <shortName evidence="1">AK</shortName>
        <ecNumber evidence="1">2.7.4.3</ecNumber>
    </recommendedName>
    <alternativeName>
        <fullName evidence="1">ATP-AMP transphosphorylase</fullName>
    </alternativeName>
    <alternativeName>
        <fullName evidence="1">ATP:AMP phosphotransferase</fullName>
    </alternativeName>
    <alternativeName>
        <fullName evidence="1">Adenylate monophosphate kinase</fullName>
    </alternativeName>
</protein>
<comment type="function">
    <text evidence="1">Catalyzes the reversible transfer of the terminal phosphate group between ATP and AMP. Plays an important role in cellular energy homeostasis and in adenine nucleotide metabolism.</text>
</comment>
<comment type="catalytic activity">
    <reaction evidence="1">
        <text>AMP + ATP = 2 ADP</text>
        <dbReference type="Rhea" id="RHEA:12973"/>
        <dbReference type="ChEBI" id="CHEBI:30616"/>
        <dbReference type="ChEBI" id="CHEBI:456215"/>
        <dbReference type="ChEBI" id="CHEBI:456216"/>
        <dbReference type="EC" id="2.7.4.3"/>
    </reaction>
</comment>
<comment type="pathway">
    <text evidence="1">Purine metabolism; AMP biosynthesis via salvage pathway; AMP from ADP: step 1/1.</text>
</comment>
<comment type="subunit">
    <text evidence="1">Monomer.</text>
</comment>
<comment type="subcellular location">
    <subcellularLocation>
        <location evidence="1">Cytoplasm</location>
    </subcellularLocation>
</comment>
<comment type="domain">
    <text evidence="1">Consists of three domains, a large central CORE domain and two small peripheral domains, NMPbind and LID, which undergo movements during catalysis. The LID domain closes over the site of phosphoryl transfer upon ATP binding. Assembling and dissambling the active center during each catalytic cycle provides an effective means to prevent ATP hydrolysis.</text>
</comment>
<comment type="similarity">
    <text evidence="1">Belongs to the adenylate kinase family.</text>
</comment>
<organism>
    <name type="scientific">Streptococcus agalactiae serotype Ia (strain ATCC 27591 / A909 / CDC SS700)</name>
    <dbReference type="NCBI Taxonomy" id="205921"/>
    <lineage>
        <taxon>Bacteria</taxon>
        <taxon>Bacillati</taxon>
        <taxon>Bacillota</taxon>
        <taxon>Bacilli</taxon>
        <taxon>Lactobacillales</taxon>
        <taxon>Streptococcaceae</taxon>
        <taxon>Streptococcus</taxon>
    </lineage>
</organism>
<feature type="chain" id="PRO_1000058911" description="Adenylate kinase">
    <location>
        <begin position="1"/>
        <end position="212"/>
    </location>
</feature>
<feature type="region of interest" description="NMP" evidence="1">
    <location>
        <begin position="30"/>
        <end position="59"/>
    </location>
</feature>
<feature type="region of interest" description="LID" evidence="1">
    <location>
        <begin position="127"/>
        <end position="159"/>
    </location>
</feature>
<feature type="binding site" evidence="1">
    <location>
        <begin position="10"/>
        <end position="15"/>
    </location>
    <ligand>
        <name>ATP</name>
        <dbReference type="ChEBI" id="CHEBI:30616"/>
    </ligand>
</feature>
<feature type="binding site" evidence="1">
    <location>
        <position position="31"/>
    </location>
    <ligand>
        <name>AMP</name>
        <dbReference type="ChEBI" id="CHEBI:456215"/>
    </ligand>
</feature>
<feature type="binding site" evidence="1">
    <location>
        <position position="36"/>
    </location>
    <ligand>
        <name>AMP</name>
        <dbReference type="ChEBI" id="CHEBI:456215"/>
    </ligand>
</feature>
<feature type="binding site" evidence="1">
    <location>
        <begin position="57"/>
        <end position="59"/>
    </location>
    <ligand>
        <name>AMP</name>
        <dbReference type="ChEBI" id="CHEBI:456215"/>
    </ligand>
</feature>
<feature type="binding site" evidence="1">
    <location>
        <begin position="86"/>
        <end position="89"/>
    </location>
    <ligand>
        <name>AMP</name>
        <dbReference type="ChEBI" id="CHEBI:456215"/>
    </ligand>
</feature>
<feature type="binding site" evidence="1">
    <location>
        <position position="93"/>
    </location>
    <ligand>
        <name>AMP</name>
        <dbReference type="ChEBI" id="CHEBI:456215"/>
    </ligand>
</feature>
<feature type="binding site" evidence="1">
    <location>
        <position position="128"/>
    </location>
    <ligand>
        <name>ATP</name>
        <dbReference type="ChEBI" id="CHEBI:30616"/>
    </ligand>
</feature>
<feature type="binding site" evidence="1">
    <location>
        <begin position="137"/>
        <end position="138"/>
    </location>
    <ligand>
        <name>ATP</name>
        <dbReference type="ChEBI" id="CHEBI:30616"/>
    </ligand>
</feature>
<feature type="binding site" evidence="1">
    <location>
        <position position="156"/>
    </location>
    <ligand>
        <name>AMP</name>
        <dbReference type="ChEBI" id="CHEBI:456215"/>
    </ligand>
</feature>
<feature type="binding site" evidence="1">
    <location>
        <position position="167"/>
    </location>
    <ligand>
        <name>AMP</name>
        <dbReference type="ChEBI" id="CHEBI:456215"/>
    </ligand>
</feature>
<feature type="binding site" evidence="1">
    <location>
        <position position="195"/>
    </location>
    <ligand>
        <name>ATP</name>
        <dbReference type="ChEBI" id="CHEBI:30616"/>
    </ligand>
</feature>
<gene>
    <name evidence="1" type="primary">adk</name>
    <name type="ordered locus">SAK_0112</name>
</gene>
<accession>Q3K3U8</accession>